<name>RISB1_BRUME</name>
<sequence length="157" mass="16810">MEFLMSKHEADAPHLLIVEARFYDDLADALLDGAKAALDEAGATYDVVTVPGALEIPATISFALDGADNGGTEYDGFVALGTVIRGETYHFDIVSNESCRALTDLSVEESIAIGNGILTVENEEQAWVRARREDKDKGGFAARAALTMIGLRKKFGA</sequence>
<feature type="chain" id="PRO_0000134726" description="6,7-dimethyl-8-ribityllumazine synthase 1">
    <location>
        <begin position="1"/>
        <end position="157"/>
    </location>
</feature>
<feature type="active site" description="Proton donor" evidence="2">
    <location>
        <position position="90"/>
    </location>
</feature>
<feature type="binding site">
    <location>
        <position position="22"/>
    </location>
    <ligand>
        <name>5-amino-6-(D-ribitylamino)uracil</name>
        <dbReference type="ChEBI" id="CHEBI:15934"/>
    </ligand>
</feature>
<feature type="binding site">
    <location>
        <begin position="53"/>
        <end position="55"/>
    </location>
    <ligand>
        <name>5-amino-6-(D-ribitylamino)uracil</name>
        <dbReference type="ChEBI" id="CHEBI:15934"/>
    </ligand>
</feature>
<feature type="binding site">
    <location>
        <begin position="82"/>
        <end position="84"/>
    </location>
    <ligand>
        <name>5-amino-6-(D-ribitylamino)uracil</name>
        <dbReference type="ChEBI" id="CHEBI:15934"/>
    </ligand>
</feature>
<feature type="binding site" evidence="1">
    <location>
        <begin position="87"/>
        <end position="88"/>
    </location>
    <ligand>
        <name>(2S)-2-hydroxy-3-oxobutyl phosphate</name>
        <dbReference type="ChEBI" id="CHEBI:58830"/>
    </ligand>
</feature>
<feature type="binding site">
    <location>
        <position position="115"/>
    </location>
    <ligand>
        <name>5-amino-6-(D-ribitylamino)uracil</name>
        <dbReference type="ChEBI" id="CHEBI:15934"/>
    </ligand>
</feature>
<feature type="binding site" evidence="1">
    <location>
        <position position="129"/>
    </location>
    <ligand>
        <name>(2S)-2-hydroxy-3-oxobutyl phosphate</name>
        <dbReference type="ChEBI" id="CHEBI:58830"/>
    </ligand>
</feature>
<feature type="strand" evidence="5">
    <location>
        <begin position="14"/>
        <end position="20"/>
    </location>
</feature>
<feature type="helix" evidence="5">
    <location>
        <begin position="24"/>
        <end position="41"/>
    </location>
</feature>
<feature type="strand" evidence="5">
    <location>
        <begin position="44"/>
        <end position="52"/>
    </location>
</feature>
<feature type="helix" evidence="5">
    <location>
        <begin position="53"/>
        <end position="55"/>
    </location>
</feature>
<feature type="helix" evidence="5">
    <location>
        <begin position="56"/>
        <end position="67"/>
    </location>
</feature>
<feature type="turn" evidence="5">
    <location>
        <begin position="68"/>
        <end position="70"/>
    </location>
</feature>
<feature type="strand" evidence="5">
    <location>
        <begin position="75"/>
        <end position="84"/>
    </location>
</feature>
<feature type="helix" evidence="5">
    <location>
        <begin position="90"/>
        <end position="108"/>
    </location>
</feature>
<feature type="strand" evidence="5">
    <location>
        <begin position="112"/>
        <end position="122"/>
    </location>
</feature>
<feature type="helix" evidence="5">
    <location>
        <begin position="123"/>
        <end position="130"/>
    </location>
</feature>
<feature type="turn" evidence="5">
    <location>
        <begin position="132"/>
        <end position="135"/>
    </location>
</feature>
<feature type="helix" evidence="5">
    <location>
        <begin position="137"/>
        <end position="154"/>
    </location>
</feature>
<organism>
    <name type="scientific">Brucella melitensis biotype 1 (strain ATCC 23456 / CCUG 17765 / NCTC 10094 / 16M)</name>
    <dbReference type="NCBI Taxonomy" id="224914"/>
    <lineage>
        <taxon>Bacteria</taxon>
        <taxon>Pseudomonadati</taxon>
        <taxon>Pseudomonadota</taxon>
        <taxon>Alphaproteobacteria</taxon>
        <taxon>Hyphomicrobiales</taxon>
        <taxon>Brucellaceae</taxon>
        <taxon>Brucella/Ochrobactrum group</taxon>
        <taxon>Brucella</taxon>
    </lineage>
</organism>
<evidence type="ECO:0000250" key="1"/>
<evidence type="ECO:0000255" key="2"/>
<evidence type="ECO:0000269" key="3">
    <source>
    </source>
</evidence>
<evidence type="ECO:0000305" key="4"/>
<evidence type="ECO:0007829" key="5">
    <source>
        <dbReference type="PDB" id="2O6H"/>
    </source>
</evidence>
<proteinExistence type="evidence at protein level"/>
<keyword id="KW-0002">3D-structure</keyword>
<keyword id="KW-0686">Riboflavin biosynthesis</keyword>
<keyword id="KW-0808">Transferase</keyword>
<reference key="1">
    <citation type="journal article" date="2002" name="Proc. Natl. Acad. Sci. U.S.A.">
        <title>The genome sequence of the facultative intracellular pathogen Brucella melitensis.</title>
        <authorList>
            <person name="DelVecchio V.G."/>
            <person name="Kapatral V."/>
            <person name="Redkar R.J."/>
            <person name="Patra G."/>
            <person name="Mujer C."/>
            <person name="Los T."/>
            <person name="Ivanova N."/>
            <person name="Anderson I."/>
            <person name="Bhattacharyya A."/>
            <person name="Lykidis A."/>
            <person name="Reznik G."/>
            <person name="Jablonski L."/>
            <person name="Larsen N."/>
            <person name="D'Souza M."/>
            <person name="Bernal A."/>
            <person name="Mazur M."/>
            <person name="Goltsman E."/>
            <person name="Selkov E."/>
            <person name="Elzer P.H."/>
            <person name="Hagius S."/>
            <person name="O'Callaghan D."/>
            <person name="Letesson J.-J."/>
            <person name="Haselkorn R."/>
            <person name="Kyrpides N.C."/>
            <person name="Overbeek R."/>
        </authorList>
    </citation>
    <scope>NUCLEOTIDE SEQUENCE [LARGE SCALE GENOMIC DNA]</scope>
    <source>
        <strain>ATCC 23456 / CCUG 17765 / NCTC 10094 / 16M</strain>
    </source>
</reference>
<reference key="2">
    <citation type="journal article" date="2006" name="J. Bacteriol.">
        <title>Evolution of vitamin B2 biosynthesis: 6,7-dimethyl-8-ribityllumazine synthases of Brucella.</title>
        <authorList>
            <person name="Zylberman V."/>
            <person name="Klinke S."/>
            <person name="Haase I."/>
            <person name="Bacher A."/>
            <person name="Fischer M."/>
            <person name="Goldbaum F.A."/>
        </authorList>
    </citation>
    <scope>GENE NAME</scope>
</reference>
<reference key="3">
    <citation type="journal article" date="2007" name="J. Mol. Biol.">
        <title>Structural and kinetic properties of lumazine synthase isoenzymes in the order Rhizobiales.</title>
        <authorList>
            <person name="Klinke S."/>
            <person name="Zylberman V."/>
            <person name="Bonomi H.R."/>
            <person name="Haase I."/>
            <person name="Guimaraes B.G."/>
            <person name="Braden B.C."/>
            <person name="Bacher A."/>
            <person name="Fischer M."/>
            <person name="Goldbaum F.A."/>
        </authorList>
    </citation>
    <scope>X-RAY CRYSTALLOGRAPHY (2.70 ANGSTROMS) IN COMPLEX WITH SUBSTRATE ANALOG INHIBITOR</scope>
    <scope>FUNCTION</scope>
    <scope>CATALYTIC ACTIVITY</scope>
    <scope>KINETIC PARAMETERS</scope>
    <scope>SUBUNIT</scope>
</reference>
<comment type="function">
    <text evidence="3">Catalyzes the formation of 6,7-dimethyl-8-ribityllumazine by condensation of 5-amino-6-(D-ribitylamino)uracil with 3,4-dihydroxy-2-butanone 4-phosphate. This is the penultimate step in the biosynthesis of riboflavin.</text>
</comment>
<comment type="catalytic activity">
    <reaction evidence="3">
        <text>(2S)-2-hydroxy-3-oxobutyl phosphate + 5-amino-6-(D-ribitylamino)uracil = 6,7-dimethyl-8-(1-D-ribityl)lumazine + phosphate + 2 H2O + H(+)</text>
        <dbReference type="Rhea" id="RHEA:26152"/>
        <dbReference type="ChEBI" id="CHEBI:15377"/>
        <dbReference type="ChEBI" id="CHEBI:15378"/>
        <dbReference type="ChEBI" id="CHEBI:15934"/>
        <dbReference type="ChEBI" id="CHEBI:43474"/>
        <dbReference type="ChEBI" id="CHEBI:58201"/>
        <dbReference type="ChEBI" id="CHEBI:58830"/>
        <dbReference type="EC" id="2.5.1.78"/>
    </reaction>
</comment>
<comment type="biophysicochemical properties">
    <kinetics>
        <KM evidence="3">4 uM for 5-amino-6-(D-ribitylamino)uracil (at 37 degrees Celsius and pH 7.0)</KM>
        <KM evidence="3">225 uM for 3,4-dihydroxy-2-butanone 4-phosphate (at 37 degrees Celsius and pH 7.0)</KM>
        <text>kcat is 0.003 sec(-1) (at 37 degrees Celsius and pH 7.0).</text>
    </kinetics>
</comment>
<comment type="pathway">
    <text>Cofactor biosynthesis; riboflavin biosynthesis; riboflavin from 2-hydroxy-3-oxobutyl phosphate and 5-amino-6-(D-ribitylamino)uracil: step 1/2.</text>
</comment>
<comment type="subunit">
    <text evidence="3">Homopentamer.</text>
</comment>
<comment type="induction">
    <text evidence="1">The two ribH genes may be differentially expressed during the Brucella infection cycle. Brucella would use RibH1 for flavin biosynthesis during the extracellular phase and RibH2 during intracellular growth (By similarity).</text>
</comment>
<comment type="similarity">
    <text evidence="4">Belongs to the DMRL synthase family.</text>
</comment>
<dbReference type="EC" id="2.5.1.78"/>
<dbReference type="EMBL" id="AE008917">
    <property type="protein sequence ID" value="AAL52368.1"/>
    <property type="molecule type" value="Genomic_DNA"/>
</dbReference>
<dbReference type="PIR" id="AE3400">
    <property type="entry name" value="AE3400"/>
</dbReference>
<dbReference type="PDB" id="2O6H">
    <property type="method" value="X-ray"/>
    <property type="resolution" value="2.70 A"/>
    <property type="chains" value="A/B/C/D/E=1-157"/>
</dbReference>
<dbReference type="PDBsum" id="2O6H"/>
<dbReference type="SMR" id="Q8YGH2"/>
<dbReference type="KEGG" id="bme:BMEI1187"/>
<dbReference type="eggNOG" id="COG0054">
    <property type="taxonomic scope" value="Bacteria"/>
</dbReference>
<dbReference type="UniPathway" id="UPA00275">
    <property type="reaction ID" value="UER00404"/>
</dbReference>
<dbReference type="EvolutionaryTrace" id="Q8YGH2"/>
<dbReference type="Proteomes" id="UP000000419">
    <property type="component" value="Chromosome I"/>
</dbReference>
<dbReference type="GO" id="GO:0005829">
    <property type="term" value="C:cytosol"/>
    <property type="evidence" value="ECO:0007669"/>
    <property type="project" value="TreeGrafter"/>
</dbReference>
<dbReference type="GO" id="GO:0009349">
    <property type="term" value="C:riboflavin synthase complex"/>
    <property type="evidence" value="ECO:0007669"/>
    <property type="project" value="InterPro"/>
</dbReference>
<dbReference type="GO" id="GO:0000906">
    <property type="term" value="F:6,7-dimethyl-8-ribityllumazine synthase activity"/>
    <property type="evidence" value="ECO:0007669"/>
    <property type="project" value="UniProtKB-UniRule"/>
</dbReference>
<dbReference type="GO" id="GO:0009231">
    <property type="term" value="P:riboflavin biosynthetic process"/>
    <property type="evidence" value="ECO:0007669"/>
    <property type="project" value="UniProtKB-UniRule"/>
</dbReference>
<dbReference type="CDD" id="cd09209">
    <property type="entry name" value="Lumazine_synthase-I"/>
    <property type="match status" value="1"/>
</dbReference>
<dbReference type="Gene3D" id="3.40.50.960">
    <property type="entry name" value="Lumazine/riboflavin synthase"/>
    <property type="match status" value="1"/>
</dbReference>
<dbReference type="HAMAP" id="MF_00178">
    <property type="entry name" value="Lumazine_synth"/>
    <property type="match status" value="1"/>
</dbReference>
<dbReference type="InterPro" id="IPR034964">
    <property type="entry name" value="LS"/>
</dbReference>
<dbReference type="InterPro" id="IPR002180">
    <property type="entry name" value="LS/RS"/>
</dbReference>
<dbReference type="InterPro" id="IPR036467">
    <property type="entry name" value="LS/RS_sf"/>
</dbReference>
<dbReference type="NCBIfam" id="TIGR00114">
    <property type="entry name" value="lumazine-synth"/>
    <property type="match status" value="1"/>
</dbReference>
<dbReference type="NCBIfam" id="NF000814">
    <property type="entry name" value="PRK00061.2-2"/>
    <property type="match status" value="1"/>
</dbReference>
<dbReference type="PANTHER" id="PTHR21058:SF0">
    <property type="entry name" value="6,7-DIMETHYL-8-RIBITYLLUMAZINE SYNTHASE"/>
    <property type="match status" value="1"/>
</dbReference>
<dbReference type="PANTHER" id="PTHR21058">
    <property type="entry name" value="6,7-DIMETHYL-8-RIBITYLLUMAZINE SYNTHASE DMRL SYNTHASE LUMAZINE SYNTHASE"/>
    <property type="match status" value="1"/>
</dbReference>
<dbReference type="Pfam" id="PF00885">
    <property type="entry name" value="DMRL_synthase"/>
    <property type="match status" value="1"/>
</dbReference>
<dbReference type="SUPFAM" id="SSF52121">
    <property type="entry name" value="Lumazine synthase"/>
    <property type="match status" value="1"/>
</dbReference>
<accession>Q8YGH2</accession>
<protein>
    <recommendedName>
        <fullName>6,7-dimethyl-8-ribityllumazine synthase 1</fullName>
        <shortName>DMRL synthase 1</shortName>
        <shortName>LS 1</shortName>
        <shortName>Lumazine synthase 1</shortName>
        <ecNumber>2.5.1.78</ecNumber>
    </recommendedName>
    <alternativeName>
        <fullName>Type I lumazine synthase</fullName>
    </alternativeName>
</protein>
<gene>
    <name type="primary">ribH1</name>
    <name type="ordered locus">BMEI1187</name>
</gene>